<sequence>MQPVLECEIFVENASGLELPELAIAPWENHLQRWLPELTAALPPADGYELTLRFTTDAEIHNLNHQYRHKDQPTDVLSFAALEDNFASPLPPGEPLYLGDIIVSVETAQRQAQERQHSLQTELGWLVSHGLLHLLGWDHPDEARLIEMLDRQAVLLRNVQLIP</sequence>
<organism>
    <name type="scientific">Picosynechococcus sp. (strain ATCC 27264 / PCC 7002 / PR-6)</name>
    <name type="common">Agmenellum quadruplicatum</name>
    <dbReference type="NCBI Taxonomy" id="32049"/>
    <lineage>
        <taxon>Bacteria</taxon>
        <taxon>Bacillati</taxon>
        <taxon>Cyanobacteriota</taxon>
        <taxon>Cyanophyceae</taxon>
        <taxon>Oscillatoriophycideae</taxon>
        <taxon>Chroococcales</taxon>
        <taxon>Geminocystaceae</taxon>
        <taxon>Picosynechococcus</taxon>
    </lineage>
</organism>
<name>YBEY_PICP2</name>
<protein>
    <recommendedName>
        <fullName evidence="1">Endoribonuclease YbeY</fullName>
        <ecNumber evidence="1">3.1.-.-</ecNumber>
    </recommendedName>
</protein>
<accession>B1XPN9</accession>
<feature type="chain" id="PRO_1000089220" description="Endoribonuclease YbeY">
    <location>
        <begin position="1"/>
        <end position="163"/>
    </location>
</feature>
<feature type="binding site" evidence="1">
    <location>
        <position position="129"/>
    </location>
    <ligand>
        <name>Zn(2+)</name>
        <dbReference type="ChEBI" id="CHEBI:29105"/>
        <note>catalytic</note>
    </ligand>
</feature>
<feature type="binding site" evidence="1">
    <location>
        <position position="133"/>
    </location>
    <ligand>
        <name>Zn(2+)</name>
        <dbReference type="ChEBI" id="CHEBI:29105"/>
        <note>catalytic</note>
    </ligand>
</feature>
<feature type="binding site" evidence="1">
    <location>
        <position position="139"/>
    </location>
    <ligand>
        <name>Zn(2+)</name>
        <dbReference type="ChEBI" id="CHEBI:29105"/>
        <note>catalytic</note>
    </ligand>
</feature>
<keyword id="KW-0963">Cytoplasm</keyword>
<keyword id="KW-0255">Endonuclease</keyword>
<keyword id="KW-0378">Hydrolase</keyword>
<keyword id="KW-0479">Metal-binding</keyword>
<keyword id="KW-0540">Nuclease</keyword>
<keyword id="KW-1185">Reference proteome</keyword>
<keyword id="KW-0690">Ribosome biogenesis</keyword>
<keyword id="KW-0698">rRNA processing</keyword>
<keyword id="KW-0862">Zinc</keyword>
<dbReference type="EC" id="3.1.-.-" evidence="1"/>
<dbReference type="EMBL" id="CP000951">
    <property type="protein sequence ID" value="ACA99753.1"/>
    <property type="molecule type" value="Genomic_DNA"/>
</dbReference>
<dbReference type="RefSeq" id="WP_012307376.1">
    <property type="nucleotide sequence ID" value="NZ_JAHHPU010000002.1"/>
</dbReference>
<dbReference type="SMR" id="B1XPN9"/>
<dbReference type="STRING" id="32049.SYNPCC7002_A1764"/>
<dbReference type="KEGG" id="syp:SYNPCC7002_A1764"/>
<dbReference type="eggNOG" id="COG0319">
    <property type="taxonomic scope" value="Bacteria"/>
</dbReference>
<dbReference type="HOGENOM" id="CLU_106710_3_0_3"/>
<dbReference type="Proteomes" id="UP000001688">
    <property type="component" value="Chromosome"/>
</dbReference>
<dbReference type="GO" id="GO:0005737">
    <property type="term" value="C:cytoplasm"/>
    <property type="evidence" value="ECO:0007669"/>
    <property type="project" value="UniProtKB-SubCell"/>
</dbReference>
<dbReference type="GO" id="GO:0004222">
    <property type="term" value="F:metalloendopeptidase activity"/>
    <property type="evidence" value="ECO:0007669"/>
    <property type="project" value="InterPro"/>
</dbReference>
<dbReference type="GO" id="GO:0004521">
    <property type="term" value="F:RNA endonuclease activity"/>
    <property type="evidence" value="ECO:0007669"/>
    <property type="project" value="UniProtKB-UniRule"/>
</dbReference>
<dbReference type="GO" id="GO:0008270">
    <property type="term" value="F:zinc ion binding"/>
    <property type="evidence" value="ECO:0007669"/>
    <property type="project" value="UniProtKB-UniRule"/>
</dbReference>
<dbReference type="GO" id="GO:0006364">
    <property type="term" value="P:rRNA processing"/>
    <property type="evidence" value="ECO:0007669"/>
    <property type="project" value="UniProtKB-UniRule"/>
</dbReference>
<dbReference type="Gene3D" id="3.40.390.30">
    <property type="entry name" value="Metalloproteases ('zincins'), catalytic domain"/>
    <property type="match status" value="1"/>
</dbReference>
<dbReference type="HAMAP" id="MF_00009">
    <property type="entry name" value="Endoribonucl_YbeY"/>
    <property type="match status" value="1"/>
</dbReference>
<dbReference type="InterPro" id="IPR023091">
    <property type="entry name" value="MetalPrtase_cat_dom_sf_prd"/>
</dbReference>
<dbReference type="InterPro" id="IPR002036">
    <property type="entry name" value="YbeY"/>
</dbReference>
<dbReference type="InterPro" id="IPR020549">
    <property type="entry name" value="YbeY_CS"/>
</dbReference>
<dbReference type="NCBIfam" id="TIGR00043">
    <property type="entry name" value="rRNA maturation RNase YbeY"/>
    <property type="match status" value="1"/>
</dbReference>
<dbReference type="PANTHER" id="PTHR46986">
    <property type="entry name" value="ENDORIBONUCLEASE YBEY, CHLOROPLASTIC"/>
    <property type="match status" value="1"/>
</dbReference>
<dbReference type="PANTHER" id="PTHR46986:SF1">
    <property type="entry name" value="ENDORIBONUCLEASE YBEY, CHLOROPLASTIC"/>
    <property type="match status" value="1"/>
</dbReference>
<dbReference type="Pfam" id="PF02130">
    <property type="entry name" value="YbeY"/>
    <property type="match status" value="1"/>
</dbReference>
<dbReference type="SUPFAM" id="SSF55486">
    <property type="entry name" value="Metalloproteases ('zincins'), catalytic domain"/>
    <property type="match status" value="1"/>
</dbReference>
<dbReference type="PROSITE" id="PS01306">
    <property type="entry name" value="UPF0054"/>
    <property type="match status" value="1"/>
</dbReference>
<reference key="1">
    <citation type="submission" date="2008-02" db="EMBL/GenBank/DDBJ databases">
        <title>Complete sequence of Synechococcus sp. PCC 7002.</title>
        <authorList>
            <person name="Li T."/>
            <person name="Zhao J."/>
            <person name="Zhao C."/>
            <person name="Liu Z."/>
            <person name="Zhao F."/>
            <person name="Marquardt J."/>
            <person name="Nomura C.T."/>
            <person name="Persson S."/>
            <person name="Detter J.C."/>
            <person name="Richardson P.M."/>
            <person name="Lanz C."/>
            <person name="Schuster S.C."/>
            <person name="Wang J."/>
            <person name="Li S."/>
            <person name="Huang X."/>
            <person name="Cai T."/>
            <person name="Yu Z."/>
            <person name="Luo J."/>
            <person name="Zhao J."/>
            <person name="Bryant D.A."/>
        </authorList>
    </citation>
    <scope>NUCLEOTIDE SEQUENCE [LARGE SCALE GENOMIC DNA]</scope>
    <source>
        <strain>ATCC 27264 / PCC 7002 / PR-6</strain>
    </source>
</reference>
<comment type="function">
    <text evidence="1">Single strand-specific metallo-endoribonuclease involved in late-stage 70S ribosome quality control and in maturation of the 3' terminus of the 16S rRNA.</text>
</comment>
<comment type="cofactor">
    <cofactor evidence="1">
        <name>Zn(2+)</name>
        <dbReference type="ChEBI" id="CHEBI:29105"/>
    </cofactor>
    <text evidence="1">Binds 1 zinc ion.</text>
</comment>
<comment type="subcellular location">
    <subcellularLocation>
        <location evidence="1">Cytoplasm</location>
    </subcellularLocation>
</comment>
<comment type="similarity">
    <text evidence="1">Belongs to the endoribonuclease YbeY family.</text>
</comment>
<evidence type="ECO:0000255" key="1">
    <source>
        <dbReference type="HAMAP-Rule" id="MF_00009"/>
    </source>
</evidence>
<gene>
    <name evidence="1" type="primary">ybeY</name>
    <name type="ordered locus">SYNPCC7002_A1764</name>
</gene>
<proteinExistence type="inferred from homology"/>